<feature type="peptide" id="PRO_0000421555" description="Extended FMRFamide-12" evidence="3">
    <location>
        <begin position="1"/>
        <end position="15"/>
    </location>
</feature>
<feature type="unsure residue" description="L or I" evidence="3">
    <location>
        <position position="4"/>
    </location>
</feature>
<feature type="unsure residue" description="L or I" evidence="3">
    <location>
        <position position="15"/>
    </location>
</feature>
<keyword id="KW-0903">Direct protein sequencing</keyword>
<keyword id="KW-0527">Neuropeptide</keyword>
<keyword id="KW-0964">Secreted</keyword>
<reference evidence="5" key="1">
    <citation type="journal article" date="2012" name="Syst. Biol.">
        <title>Peptidomics-based phylogeny and biogeography of Mantophasmatodea (Hexapoda).</title>
        <authorList>
            <person name="Predel R."/>
            <person name="Neupert S."/>
            <person name="Huetteroth W."/>
            <person name="Kahnt J."/>
            <person name="Waidelich D."/>
            <person name="Roth S."/>
        </authorList>
    </citation>
    <scope>PROTEIN SEQUENCE</scope>
    <source>
        <tissue evidence="3">Thoracic perisympathetic organs</tissue>
    </source>
</reference>
<evidence type="ECO:0000250" key="1">
    <source>
        <dbReference type="UniProtKB" id="P34405"/>
    </source>
</evidence>
<evidence type="ECO:0000255" key="2"/>
<evidence type="ECO:0000269" key="3">
    <source>
    </source>
</evidence>
<evidence type="ECO:0000303" key="4">
    <source>
    </source>
</evidence>
<evidence type="ECO:0000305" key="5"/>
<evidence type="ECO:0000305" key="6">
    <source>
    </source>
</evidence>
<proteinExistence type="evidence at protein level"/>
<name>FAR12_AUSRA</name>
<protein>
    <recommendedName>
        <fullName evidence="4">Extended FMRFamide-12</fullName>
        <shortName evidence="4">FMRFa-12</shortName>
    </recommendedName>
</protein>
<comment type="function">
    <text evidence="1">FMRFamides and FMRFamide-like peptides are neuropeptides.</text>
</comment>
<comment type="subcellular location">
    <subcellularLocation>
        <location evidence="6">Secreted</location>
    </subcellularLocation>
</comment>
<comment type="similarity">
    <text evidence="2">Belongs to the FARP (FMRF amide related peptide) family.</text>
</comment>
<dbReference type="GO" id="GO:0005576">
    <property type="term" value="C:extracellular region"/>
    <property type="evidence" value="ECO:0007669"/>
    <property type="project" value="UniProtKB-SubCell"/>
</dbReference>
<dbReference type="GO" id="GO:0007218">
    <property type="term" value="P:neuropeptide signaling pathway"/>
    <property type="evidence" value="ECO:0007669"/>
    <property type="project" value="UniProtKB-KW"/>
</dbReference>
<accession>B3A0A9</accession>
<sequence length="15" mass="1772">SPTLDDEHNDNFVRL</sequence>
<organism>
    <name type="scientific">Austrophasma rawsonvillense</name>
    <name type="common">Gladiator</name>
    <name type="synonym">Heel-walker</name>
    <dbReference type="NCBI Taxonomy" id="253137"/>
    <lineage>
        <taxon>Eukaryota</taxon>
        <taxon>Metazoa</taxon>
        <taxon>Ecdysozoa</taxon>
        <taxon>Arthropoda</taxon>
        <taxon>Hexapoda</taxon>
        <taxon>Insecta</taxon>
        <taxon>Pterygota</taxon>
        <taxon>Neoptera</taxon>
        <taxon>Polyneoptera</taxon>
        <taxon>Mantophasmatodea</taxon>
        <taxon>Austrophasmatidae</taxon>
        <taxon>Austrophasma</taxon>
    </lineage>
</organism>